<name>RNC_SHESH</name>
<reference key="1">
    <citation type="submission" date="2007-08" db="EMBL/GenBank/DDBJ databases">
        <title>Complete sequence of Shewanella sediminis HAW-EB3.</title>
        <authorList>
            <consortium name="US DOE Joint Genome Institute"/>
            <person name="Copeland A."/>
            <person name="Lucas S."/>
            <person name="Lapidus A."/>
            <person name="Barry K."/>
            <person name="Glavina del Rio T."/>
            <person name="Dalin E."/>
            <person name="Tice H."/>
            <person name="Pitluck S."/>
            <person name="Chertkov O."/>
            <person name="Brettin T."/>
            <person name="Bruce D."/>
            <person name="Detter J.C."/>
            <person name="Han C."/>
            <person name="Schmutz J."/>
            <person name="Larimer F."/>
            <person name="Land M."/>
            <person name="Hauser L."/>
            <person name="Kyrpides N."/>
            <person name="Kim E."/>
            <person name="Zhao J.-S."/>
            <person name="Richardson P."/>
        </authorList>
    </citation>
    <scope>NUCLEOTIDE SEQUENCE [LARGE SCALE GENOMIC DNA]</scope>
    <source>
        <strain>HAW-EB3</strain>
    </source>
</reference>
<accession>A8FSD6</accession>
<evidence type="ECO:0000255" key="1">
    <source>
        <dbReference type="HAMAP-Rule" id="MF_00104"/>
    </source>
</evidence>
<organism>
    <name type="scientific">Shewanella sediminis (strain HAW-EB3)</name>
    <dbReference type="NCBI Taxonomy" id="425104"/>
    <lineage>
        <taxon>Bacteria</taxon>
        <taxon>Pseudomonadati</taxon>
        <taxon>Pseudomonadota</taxon>
        <taxon>Gammaproteobacteria</taxon>
        <taxon>Alteromonadales</taxon>
        <taxon>Shewanellaceae</taxon>
        <taxon>Shewanella</taxon>
    </lineage>
</organism>
<gene>
    <name evidence="1" type="primary">rnc</name>
    <name type="ordered locus">Ssed_1148</name>
</gene>
<keyword id="KW-0963">Cytoplasm</keyword>
<keyword id="KW-0255">Endonuclease</keyword>
<keyword id="KW-0378">Hydrolase</keyword>
<keyword id="KW-0460">Magnesium</keyword>
<keyword id="KW-0479">Metal-binding</keyword>
<keyword id="KW-0507">mRNA processing</keyword>
<keyword id="KW-0540">Nuclease</keyword>
<keyword id="KW-1185">Reference proteome</keyword>
<keyword id="KW-0694">RNA-binding</keyword>
<keyword id="KW-0698">rRNA processing</keyword>
<keyword id="KW-0699">rRNA-binding</keyword>
<keyword id="KW-0819">tRNA processing</keyword>
<feature type="chain" id="PRO_1000075818" description="Ribonuclease 3">
    <location>
        <begin position="1"/>
        <end position="225"/>
    </location>
</feature>
<feature type="domain" description="RNase III" evidence="1">
    <location>
        <begin position="7"/>
        <end position="129"/>
    </location>
</feature>
<feature type="domain" description="DRBM" evidence="1">
    <location>
        <begin position="155"/>
        <end position="225"/>
    </location>
</feature>
<feature type="active site" evidence="1">
    <location>
        <position position="46"/>
    </location>
</feature>
<feature type="active site" evidence="1">
    <location>
        <position position="118"/>
    </location>
</feature>
<feature type="binding site" evidence="1">
    <location>
        <position position="42"/>
    </location>
    <ligand>
        <name>Mg(2+)</name>
        <dbReference type="ChEBI" id="CHEBI:18420"/>
    </ligand>
</feature>
<feature type="binding site" evidence="1">
    <location>
        <position position="115"/>
    </location>
    <ligand>
        <name>Mg(2+)</name>
        <dbReference type="ChEBI" id="CHEBI:18420"/>
    </ligand>
</feature>
<feature type="binding site" evidence="1">
    <location>
        <position position="118"/>
    </location>
    <ligand>
        <name>Mg(2+)</name>
        <dbReference type="ChEBI" id="CHEBI:18420"/>
    </ligand>
</feature>
<protein>
    <recommendedName>
        <fullName evidence="1">Ribonuclease 3</fullName>
        <ecNumber evidence="1">3.1.26.3</ecNumber>
    </recommendedName>
    <alternativeName>
        <fullName evidence="1">Ribonuclease III</fullName>
        <shortName evidence="1">RNase III</shortName>
    </alternativeName>
</protein>
<comment type="function">
    <text evidence="1">Digests double-stranded RNA. Involved in the processing of primary rRNA transcript to yield the immediate precursors to the large and small rRNAs (23S and 16S). Processes some mRNAs, and tRNAs when they are encoded in the rRNA operon. Processes pre-crRNA and tracrRNA of type II CRISPR loci if present in the organism.</text>
</comment>
<comment type="catalytic activity">
    <reaction evidence="1">
        <text>Endonucleolytic cleavage to 5'-phosphomonoester.</text>
        <dbReference type="EC" id="3.1.26.3"/>
    </reaction>
</comment>
<comment type="cofactor">
    <cofactor evidence="1">
        <name>Mg(2+)</name>
        <dbReference type="ChEBI" id="CHEBI:18420"/>
    </cofactor>
</comment>
<comment type="subunit">
    <text evidence="1">Homodimer.</text>
</comment>
<comment type="subcellular location">
    <subcellularLocation>
        <location evidence="1">Cytoplasm</location>
    </subcellularLocation>
</comment>
<comment type="similarity">
    <text evidence="1">Belongs to the ribonuclease III family.</text>
</comment>
<proteinExistence type="inferred from homology"/>
<dbReference type="EC" id="3.1.26.3" evidence="1"/>
<dbReference type="EMBL" id="CP000821">
    <property type="protein sequence ID" value="ABV35759.1"/>
    <property type="molecule type" value="Genomic_DNA"/>
</dbReference>
<dbReference type="RefSeq" id="WP_012141495.1">
    <property type="nucleotide sequence ID" value="NC_009831.1"/>
</dbReference>
<dbReference type="SMR" id="A8FSD6"/>
<dbReference type="STRING" id="425104.Ssed_1148"/>
<dbReference type="KEGG" id="sse:Ssed_1148"/>
<dbReference type="eggNOG" id="COG0571">
    <property type="taxonomic scope" value="Bacteria"/>
</dbReference>
<dbReference type="HOGENOM" id="CLU_000907_1_1_6"/>
<dbReference type="OrthoDB" id="9805026at2"/>
<dbReference type="Proteomes" id="UP000002015">
    <property type="component" value="Chromosome"/>
</dbReference>
<dbReference type="GO" id="GO:0005737">
    <property type="term" value="C:cytoplasm"/>
    <property type="evidence" value="ECO:0007669"/>
    <property type="project" value="UniProtKB-SubCell"/>
</dbReference>
<dbReference type="GO" id="GO:0003725">
    <property type="term" value="F:double-stranded RNA binding"/>
    <property type="evidence" value="ECO:0007669"/>
    <property type="project" value="TreeGrafter"/>
</dbReference>
<dbReference type="GO" id="GO:0046872">
    <property type="term" value="F:metal ion binding"/>
    <property type="evidence" value="ECO:0007669"/>
    <property type="project" value="UniProtKB-KW"/>
</dbReference>
<dbReference type="GO" id="GO:0004525">
    <property type="term" value="F:ribonuclease III activity"/>
    <property type="evidence" value="ECO:0007669"/>
    <property type="project" value="UniProtKB-UniRule"/>
</dbReference>
<dbReference type="GO" id="GO:0019843">
    <property type="term" value="F:rRNA binding"/>
    <property type="evidence" value="ECO:0007669"/>
    <property type="project" value="UniProtKB-KW"/>
</dbReference>
<dbReference type="GO" id="GO:0006397">
    <property type="term" value="P:mRNA processing"/>
    <property type="evidence" value="ECO:0007669"/>
    <property type="project" value="UniProtKB-UniRule"/>
</dbReference>
<dbReference type="GO" id="GO:0010468">
    <property type="term" value="P:regulation of gene expression"/>
    <property type="evidence" value="ECO:0007669"/>
    <property type="project" value="TreeGrafter"/>
</dbReference>
<dbReference type="GO" id="GO:0006364">
    <property type="term" value="P:rRNA processing"/>
    <property type="evidence" value="ECO:0007669"/>
    <property type="project" value="UniProtKB-UniRule"/>
</dbReference>
<dbReference type="GO" id="GO:0008033">
    <property type="term" value="P:tRNA processing"/>
    <property type="evidence" value="ECO:0007669"/>
    <property type="project" value="UniProtKB-KW"/>
</dbReference>
<dbReference type="CDD" id="cd10845">
    <property type="entry name" value="DSRM_RNAse_III_family"/>
    <property type="match status" value="1"/>
</dbReference>
<dbReference type="CDD" id="cd00593">
    <property type="entry name" value="RIBOc"/>
    <property type="match status" value="1"/>
</dbReference>
<dbReference type="FunFam" id="1.10.1520.10:FF:000001">
    <property type="entry name" value="Ribonuclease 3"/>
    <property type="match status" value="1"/>
</dbReference>
<dbReference type="FunFam" id="3.30.160.20:FF:000003">
    <property type="entry name" value="Ribonuclease 3"/>
    <property type="match status" value="1"/>
</dbReference>
<dbReference type="Gene3D" id="3.30.160.20">
    <property type="match status" value="1"/>
</dbReference>
<dbReference type="Gene3D" id="1.10.1520.10">
    <property type="entry name" value="Ribonuclease III domain"/>
    <property type="match status" value="1"/>
</dbReference>
<dbReference type="HAMAP" id="MF_00104">
    <property type="entry name" value="RNase_III"/>
    <property type="match status" value="1"/>
</dbReference>
<dbReference type="InterPro" id="IPR014720">
    <property type="entry name" value="dsRBD_dom"/>
</dbReference>
<dbReference type="InterPro" id="IPR011907">
    <property type="entry name" value="RNase_III"/>
</dbReference>
<dbReference type="InterPro" id="IPR000999">
    <property type="entry name" value="RNase_III_dom"/>
</dbReference>
<dbReference type="InterPro" id="IPR036389">
    <property type="entry name" value="RNase_III_sf"/>
</dbReference>
<dbReference type="NCBIfam" id="TIGR02191">
    <property type="entry name" value="RNaseIII"/>
    <property type="match status" value="1"/>
</dbReference>
<dbReference type="PANTHER" id="PTHR11207:SF0">
    <property type="entry name" value="RIBONUCLEASE 3"/>
    <property type="match status" value="1"/>
</dbReference>
<dbReference type="PANTHER" id="PTHR11207">
    <property type="entry name" value="RIBONUCLEASE III"/>
    <property type="match status" value="1"/>
</dbReference>
<dbReference type="Pfam" id="PF00035">
    <property type="entry name" value="dsrm"/>
    <property type="match status" value="1"/>
</dbReference>
<dbReference type="Pfam" id="PF14622">
    <property type="entry name" value="Ribonucleas_3_3"/>
    <property type="match status" value="1"/>
</dbReference>
<dbReference type="SMART" id="SM00358">
    <property type="entry name" value="DSRM"/>
    <property type="match status" value="1"/>
</dbReference>
<dbReference type="SMART" id="SM00535">
    <property type="entry name" value="RIBOc"/>
    <property type="match status" value="1"/>
</dbReference>
<dbReference type="SUPFAM" id="SSF54768">
    <property type="entry name" value="dsRNA-binding domain-like"/>
    <property type="match status" value="1"/>
</dbReference>
<dbReference type="SUPFAM" id="SSF69065">
    <property type="entry name" value="RNase III domain-like"/>
    <property type="match status" value="1"/>
</dbReference>
<dbReference type="PROSITE" id="PS50137">
    <property type="entry name" value="DS_RBD"/>
    <property type="match status" value="1"/>
</dbReference>
<dbReference type="PROSITE" id="PS00517">
    <property type="entry name" value="RNASE_3_1"/>
    <property type="match status" value="1"/>
</dbReference>
<dbReference type="PROSITE" id="PS50142">
    <property type="entry name" value="RNASE_3_2"/>
    <property type="match status" value="1"/>
</dbReference>
<sequence>MEPIKNMPRLCRTLGYEFNDQSLLEHALTHRSASSKHNERLEFLGDSILSIIISDALFHQFPKATEGDLSRMRATLVCGKMLAEIGFEFKLGDYLNLGPGELKSGGFRRESIIADAVEAIIGAVYIDSGVEKCRCLVLSWYESRLAIIQPVNQKDPKTLLQELLQGFKKPLPVYKVIDIKGEAHAQTFTVECYVEELSKPVIGIASSRRKAEQLAAADALELMKR</sequence>